<sequence>MKASEIRSAFLKFFESKGHQIVASSPVVPGDDPTLLFTNAGMNQFKDVFLGFDKRPYSRATTAQKCIRAGGKHNDLENVGYTARHHTFFEMLGNFSFGDYFKQDAIAYAWELLTEVFKLPKDKLWVTVYAEDDEAYEIWNKQVGVPAERIVRIGDNKGARYASDNFWMMGDTGPCGPCTEIFYDHGPEIPGGPPGSPDEDGDRYIEIWNNVFMQFNRDEAGVMHKLPKPSVDTGMGLERITAVLQHVHSNYEIDLFVALLAAAKQAVDAAGAGDSDKDSPSLKVIADHIRACSFTIVDGVIPGNEGRGYVLRRIARRGIRHGYKLGARKPFFHTLVAELVRQMGEAYPELARAEARVTEVLKQEEERFFQTIANGMEILESALAGGAKTLDGETAFKLHDTYGFPLDLTADVCRERGVTVDQAGFDAAMKRQREQARAAGKFKMAAGLEYAGAATTFHGYEHLVHEGSKVTAVYVDGSAVPSAKAGDDAVIVLDHTPFYAESGGQVGDGGELRNGTSRVIVEDTQKIQADVFGHHGRVVEGEIRVGDVLNARVDGEQRARTVRNHSVTHLMHKALREVLGGHVQQKGSLVNAERTRFDFAHNAPMSDAQIAKVEAIVNAEILANAPTQARVLPMEEAQKLGAMMLFGEKYGDEVRVLDIGSSRELCGGTHVQRTGDIGLFKVVAESGVAAGIRRVEAITGDNALAYVQQLEGTVAGLAGALKAAPAEVPGRVAAVLEQLRTLEKELAALKGKLASSQGDGLLAQAVDVKGLKVLAARLEGADAKALRDTLDQLKNKLKSAAIVLAVVEGGKVQLAAGVTADATARVKAGELVNFVAQQVGGKGGGKPDLAMAGGTDPAGLGAALASVAGWVGERA</sequence>
<evidence type="ECO:0000255" key="1">
    <source>
        <dbReference type="HAMAP-Rule" id="MF_00036"/>
    </source>
</evidence>
<reference key="1">
    <citation type="journal article" date="2007" name="J. Bacteriol.">
        <title>Whole-genome analysis of the methyl tert-butyl ether-degrading beta-proteobacterium Methylibium petroleiphilum PM1.</title>
        <authorList>
            <person name="Kane S.R."/>
            <person name="Chakicherla A.Y."/>
            <person name="Chain P.S.G."/>
            <person name="Schmidt R."/>
            <person name="Shin M.W."/>
            <person name="Legler T.C."/>
            <person name="Scow K.M."/>
            <person name="Larimer F.W."/>
            <person name="Lucas S.M."/>
            <person name="Richardson P.M."/>
            <person name="Hristova K.R."/>
        </authorList>
    </citation>
    <scope>NUCLEOTIDE SEQUENCE [LARGE SCALE GENOMIC DNA]</scope>
    <source>
        <strain>ATCC BAA-1232 / LMG 22953 / PM1</strain>
    </source>
</reference>
<comment type="function">
    <text evidence="1">Catalyzes the attachment of alanine to tRNA(Ala) in a two-step reaction: alanine is first activated by ATP to form Ala-AMP and then transferred to the acceptor end of tRNA(Ala). Also edits incorrectly charged Ser-tRNA(Ala) and Gly-tRNA(Ala) via its editing domain.</text>
</comment>
<comment type="catalytic activity">
    <reaction evidence="1">
        <text>tRNA(Ala) + L-alanine + ATP = L-alanyl-tRNA(Ala) + AMP + diphosphate</text>
        <dbReference type="Rhea" id="RHEA:12540"/>
        <dbReference type="Rhea" id="RHEA-COMP:9657"/>
        <dbReference type="Rhea" id="RHEA-COMP:9923"/>
        <dbReference type="ChEBI" id="CHEBI:30616"/>
        <dbReference type="ChEBI" id="CHEBI:33019"/>
        <dbReference type="ChEBI" id="CHEBI:57972"/>
        <dbReference type="ChEBI" id="CHEBI:78442"/>
        <dbReference type="ChEBI" id="CHEBI:78497"/>
        <dbReference type="ChEBI" id="CHEBI:456215"/>
        <dbReference type="EC" id="6.1.1.7"/>
    </reaction>
</comment>
<comment type="cofactor">
    <cofactor evidence="1">
        <name>Zn(2+)</name>
        <dbReference type="ChEBI" id="CHEBI:29105"/>
    </cofactor>
    <text evidence="1">Binds 1 zinc ion per subunit.</text>
</comment>
<comment type="subcellular location">
    <subcellularLocation>
        <location evidence="1">Cytoplasm</location>
    </subcellularLocation>
</comment>
<comment type="domain">
    <text evidence="1">Consists of three domains; the N-terminal catalytic domain, the editing domain and the C-terminal C-Ala domain. The editing domain removes incorrectly charged amino acids, while the C-Ala domain, along with tRNA(Ala), serves as a bridge to cooperatively bring together the editing and aminoacylation centers thus stimulating deacylation of misacylated tRNAs.</text>
</comment>
<comment type="similarity">
    <text evidence="1">Belongs to the class-II aminoacyl-tRNA synthetase family.</text>
</comment>
<keyword id="KW-0030">Aminoacyl-tRNA synthetase</keyword>
<keyword id="KW-0067">ATP-binding</keyword>
<keyword id="KW-0963">Cytoplasm</keyword>
<keyword id="KW-0436">Ligase</keyword>
<keyword id="KW-0479">Metal-binding</keyword>
<keyword id="KW-0547">Nucleotide-binding</keyword>
<keyword id="KW-0648">Protein biosynthesis</keyword>
<keyword id="KW-1185">Reference proteome</keyword>
<keyword id="KW-0694">RNA-binding</keyword>
<keyword id="KW-0820">tRNA-binding</keyword>
<keyword id="KW-0862">Zinc</keyword>
<feature type="chain" id="PRO_0000347670" description="Alanine--tRNA ligase">
    <location>
        <begin position="1"/>
        <end position="875"/>
    </location>
</feature>
<feature type="binding site" evidence="1">
    <location>
        <position position="565"/>
    </location>
    <ligand>
        <name>Zn(2+)</name>
        <dbReference type="ChEBI" id="CHEBI:29105"/>
    </ligand>
</feature>
<feature type="binding site" evidence="1">
    <location>
        <position position="569"/>
    </location>
    <ligand>
        <name>Zn(2+)</name>
        <dbReference type="ChEBI" id="CHEBI:29105"/>
    </ligand>
</feature>
<feature type="binding site" evidence="1">
    <location>
        <position position="666"/>
    </location>
    <ligand>
        <name>Zn(2+)</name>
        <dbReference type="ChEBI" id="CHEBI:29105"/>
    </ligand>
</feature>
<feature type="binding site" evidence="1">
    <location>
        <position position="670"/>
    </location>
    <ligand>
        <name>Zn(2+)</name>
        <dbReference type="ChEBI" id="CHEBI:29105"/>
    </ligand>
</feature>
<proteinExistence type="inferred from homology"/>
<protein>
    <recommendedName>
        <fullName evidence="1">Alanine--tRNA ligase</fullName>
        <ecNumber evidence="1">6.1.1.7</ecNumber>
    </recommendedName>
    <alternativeName>
        <fullName evidence="1">Alanyl-tRNA synthetase</fullName>
        <shortName evidence="1">AlaRS</shortName>
    </alternativeName>
</protein>
<name>SYA_METPP</name>
<gene>
    <name evidence="1" type="primary">alaS</name>
    <name type="ordered locus">Mpe_A2323</name>
</gene>
<accession>A2SI90</accession>
<dbReference type="EC" id="6.1.1.7" evidence="1"/>
<dbReference type="EMBL" id="CP000555">
    <property type="protein sequence ID" value="ABM95279.1"/>
    <property type="molecule type" value="Genomic_DNA"/>
</dbReference>
<dbReference type="RefSeq" id="WP_011829916.1">
    <property type="nucleotide sequence ID" value="NC_008825.1"/>
</dbReference>
<dbReference type="SMR" id="A2SI90"/>
<dbReference type="STRING" id="420662.Mpe_A2323"/>
<dbReference type="KEGG" id="mpt:Mpe_A2323"/>
<dbReference type="eggNOG" id="COG0013">
    <property type="taxonomic scope" value="Bacteria"/>
</dbReference>
<dbReference type="HOGENOM" id="CLU_004485_1_1_4"/>
<dbReference type="Proteomes" id="UP000000366">
    <property type="component" value="Chromosome"/>
</dbReference>
<dbReference type="GO" id="GO:0005829">
    <property type="term" value="C:cytosol"/>
    <property type="evidence" value="ECO:0007669"/>
    <property type="project" value="TreeGrafter"/>
</dbReference>
<dbReference type="GO" id="GO:0004813">
    <property type="term" value="F:alanine-tRNA ligase activity"/>
    <property type="evidence" value="ECO:0007669"/>
    <property type="project" value="UniProtKB-UniRule"/>
</dbReference>
<dbReference type="GO" id="GO:0002161">
    <property type="term" value="F:aminoacyl-tRNA deacylase activity"/>
    <property type="evidence" value="ECO:0007669"/>
    <property type="project" value="TreeGrafter"/>
</dbReference>
<dbReference type="GO" id="GO:0005524">
    <property type="term" value="F:ATP binding"/>
    <property type="evidence" value="ECO:0007669"/>
    <property type="project" value="UniProtKB-UniRule"/>
</dbReference>
<dbReference type="GO" id="GO:0000049">
    <property type="term" value="F:tRNA binding"/>
    <property type="evidence" value="ECO:0007669"/>
    <property type="project" value="UniProtKB-KW"/>
</dbReference>
<dbReference type="GO" id="GO:0008270">
    <property type="term" value="F:zinc ion binding"/>
    <property type="evidence" value="ECO:0007669"/>
    <property type="project" value="UniProtKB-UniRule"/>
</dbReference>
<dbReference type="GO" id="GO:0006419">
    <property type="term" value="P:alanyl-tRNA aminoacylation"/>
    <property type="evidence" value="ECO:0007669"/>
    <property type="project" value="UniProtKB-UniRule"/>
</dbReference>
<dbReference type="GO" id="GO:0045892">
    <property type="term" value="P:negative regulation of DNA-templated transcription"/>
    <property type="evidence" value="ECO:0007669"/>
    <property type="project" value="TreeGrafter"/>
</dbReference>
<dbReference type="CDD" id="cd00673">
    <property type="entry name" value="AlaRS_core"/>
    <property type="match status" value="1"/>
</dbReference>
<dbReference type="FunFam" id="2.40.30.130:FF:000001">
    <property type="entry name" value="Alanine--tRNA ligase"/>
    <property type="match status" value="1"/>
</dbReference>
<dbReference type="FunFam" id="3.10.310.40:FF:000001">
    <property type="entry name" value="Alanine--tRNA ligase"/>
    <property type="match status" value="1"/>
</dbReference>
<dbReference type="FunFam" id="3.30.54.20:FF:000001">
    <property type="entry name" value="Alanine--tRNA ligase"/>
    <property type="match status" value="1"/>
</dbReference>
<dbReference type="FunFam" id="3.30.930.10:FF:000004">
    <property type="entry name" value="Alanine--tRNA ligase"/>
    <property type="match status" value="1"/>
</dbReference>
<dbReference type="FunFam" id="3.30.980.10:FF:000004">
    <property type="entry name" value="Alanine--tRNA ligase, cytoplasmic"/>
    <property type="match status" value="1"/>
</dbReference>
<dbReference type="Gene3D" id="2.40.30.130">
    <property type="match status" value="1"/>
</dbReference>
<dbReference type="Gene3D" id="3.10.310.40">
    <property type="match status" value="1"/>
</dbReference>
<dbReference type="Gene3D" id="3.30.54.20">
    <property type="match status" value="1"/>
</dbReference>
<dbReference type="Gene3D" id="6.10.250.550">
    <property type="match status" value="1"/>
</dbReference>
<dbReference type="Gene3D" id="3.30.930.10">
    <property type="entry name" value="Bira Bifunctional Protein, Domain 2"/>
    <property type="match status" value="1"/>
</dbReference>
<dbReference type="Gene3D" id="3.30.980.10">
    <property type="entry name" value="Threonyl-trna Synthetase, Chain A, domain 2"/>
    <property type="match status" value="1"/>
</dbReference>
<dbReference type="HAMAP" id="MF_00036_B">
    <property type="entry name" value="Ala_tRNA_synth_B"/>
    <property type="match status" value="1"/>
</dbReference>
<dbReference type="InterPro" id="IPR045864">
    <property type="entry name" value="aa-tRNA-synth_II/BPL/LPL"/>
</dbReference>
<dbReference type="InterPro" id="IPR002318">
    <property type="entry name" value="Ala-tRNA-lgiase_IIc"/>
</dbReference>
<dbReference type="InterPro" id="IPR018162">
    <property type="entry name" value="Ala-tRNA-ligase_IIc_anticod-bd"/>
</dbReference>
<dbReference type="InterPro" id="IPR018165">
    <property type="entry name" value="Ala-tRNA-synth_IIc_core"/>
</dbReference>
<dbReference type="InterPro" id="IPR018164">
    <property type="entry name" value="Ala-tRNA-synth_IIc_N"/>
</dbReference>
<dbReference type="InterPro" id="IPR050058">
    <property type="entry name" value="Ala-tRNA_ligase"/>
</dbReference>
<dbReference type="InterPro" id="IPR023033">
    <property type="entry name" value="Ala_tRNA_ligase_euk/bac"/>
</dbReference>
<dbReference type="InterPro" id="IPR003156">
    <property type="entry name" value="DHHA1_dom"/>
</dbReference>
<dbReference type="InterPro" id="IPR018163">
    <property type="entry name" value="Thr/Ala-tRNA-synth_IIc_edit"/>
</dbReference>
<dbReference type="InterPro" id="IPR009000">
    <property type="entry name" value="Transl_B-barrel_sf"/>
</dbReference>
<dbReference type="InterPro" id="IPR012947">
    <property type="entry name" value="tRNA_SAD"/>
</dbReference>
<dbReference type="NCBIfam" id="TIGR00344">
    <property type="entry name" value="alaS"/>
    <property type="match status" value="1"/>
</dbReference>
<dbReference type="PANTHER" id="PTHR11777:SF9">
    <property type="entry name" value="ALANINE--TRNA LIGASE, CYTOPLASMIC"/>
    <property type="match status" value="1"/>
</dbReference>
<dbReference type="PANTHER" id="PTHR11777">
    <property type="entry name" value="ALANYL-TRNA SYNTHETASE"/>
    <property type="match status" value="1"/>
</dbReference>
<dbReference type="Pfam" id="PF02272">
    <property type="entry name" value="DHHA1"/>
    <property type="match status" value="1"/>
</dbReference>
<dbReference type="Pfam" id="PF01411">
    <property type="entry name" value="tRNA-synt_2c"/>
    <property type="match status" value="1"/>
</dbReference>
<dbReference type="Pfam" id="PF07973">
    <property type="entry name" value="tRNA_SAD"/>
    <property type="match status" value="1"/>
</dbReference>
<dbReference type="PRINTS" id="PR00980">
    <property type="entry name" value="TRNASYNTHALA"/>
</dbReference>
<dbReference type="SMART" id="SM00863">
    <property type="entry name" value="tRNA_SAD"/>
    <property type="match status" value="1"/>
</dbReference>
<dbReference type="SUPFAM" id="SSF55681">
    <property type="entry name" value="Class II aaRS and biotin synthetases"/>
    <property type="match status" value="1"/>
</dbReference>
<dbReference type="SUPFAM" id="SSF101353">
    <property type="entry name" value="Putative anticodon-binding domain of alanyl-tRNA synthetase (AlaRS)"/>
    <property type="match status" value="1"/>
</dbReference>
<dbReference type="SUPFAM" id="SSF55186">
    <property type="entry name" value="ThrRS/AlaRS common domain"/>
    <property type="match status" value="1"/>
</dbReference>
<dbReference type="SUPFAM" id="SSF50447">
    <property type="entry name" value="Translation proteins"/>
    <property type="match status" value="1"/>
</dbReference>
<dbReference type="PROSITE" id="PS50860">
    <property type="entry name" value="AA_TRNA_LIGASE_II_ALA"/>
    <property type="match status" value="1"/>
</dbReference>
<organism>
    <name type="scientific">Methylibium petroleiphilum (strain ATCC BAA-1232 / LMG 22953 / PM1)</name>
    <dbReference type="NCBI Taxonomy" id="420662"/>
    <lineage>
        <taxon>Bacteria</taxon>
        <taxon>Pseudomonadati</taxon>
        <taxon>Pseudomonadota</taxon>
        <taxon>Betaproteobacteria</taxon>
        <taxon>Burkholderiales</taxon>
        <taxon>Sphaerotilaceae</taxon>
        <taxon>Methylibium</taxon>
    </lineage>
</organism>